<organismHost>
    <name type="scientific">Canis lupus familiaris</name>
    <name type="common">Dog</name>
    <name type="synonym">Canis familiaris</name>
    <dbReference type="NCBI Taxonomy" id="9615"/>
</organismHost>
<organism>
    <name type="scientific">Canine coronavirus (strain BGF10)</name>
    <name type="common">CCoV</name>
    <name type="synonym">Canine enteric coronavirus</name>
    <dbReference type="NCBI Taxonomy" id="441619"/>
    <lineage>
        <taxon>Viruses</taxon>
        <taxon>Riboviria</taxon>
        <taxon>Orthornavirae</taxon>
        <taxon>Pisuviricota</taxon>
        <taxon>Pisoniviricetes</taxon>
        <taxon>Nidovirales</taxon>
        <taxon>Cornidovirineae</taxon>
        <taxon>Coronaviridae</taxon>
        <taxon>Orthocoronavirinae</taxon>
        <taxon>Alphacoronavirus</taxon>
        <taxon>Tegacovirus</taxon>
        <taxon>Alphacoronavirus 1</taxon>
    </lineage>
</organism>
<protein>
    <recommendedName>
        <fullName evidence="1">Spike glycoprotein</fullName>
        <shortName evidence="1">S glycoprotein</shortName>
    </recommendedName>
    <alternativeName>
        <fullName evidence="1">E2</fullName>
    </alternativeName>
    <alternativeName>
        <fullName evidence="1">Peplomer protein</fullName>
    </alternativeName>
</protein>
<dbReference type="EMBL" id="AY342160">
    <property type="protein sequence ID" value="AAQ17220.1"/>
    <property type="molecule type" value="Genomic_RNA"/>
</dbReference>
<dbReference type="SMR" id="Q7T6T3"/>
<dbReference type="GO" id="GO:0044173">
    <property type="term" value="C:host cell endoplasmic reticulum-Golgi intermediate compartment membrane"/>
    <property type="evidence" value="ECO:0007669"/>
    <property type="project" value="UniProtKB-SubCell"/>
</dbReference>
<dbReference type="GO" id="GO:0016020">
    <property type="term" value="C:membrane"/>
    <property type="evidence" value="ECO:0007669"/>
    <property type="project" value="UniProtKB-UniRule"/>
</dbReference>
<dbReference type="GO" id="GO:0019031">
    <property type="term" value="C:viral envelope"/>
    <property type="evidence" value="ECO:0007669"/>
    <property type="project" value="UniProtKB-UniRule"/>
</dbReference>
<dbReference type="GO" id="GO:0055036">
    <property type="term" value="C:virion membrane"/>
    <property type="evidence" value="ECO:0007669"/>
    <property type="project" value="UniProtKB-SubCell"/>
</dbReference>
<dbReference type="GO" id="GO:0075509">
    <property type="term" value="P:endocytosis involved in viral entry into host cell"/>
    <property type="evidence" value="ECO:0007669"/>
    <property type="project" value="UniProtKB-UniRule"/>
</dbReference>
<dbReference type="GO" id="GO:0039654">
    <property type="term" value="P:fusion of virus membrane with host endosome membrane"/>
    <property type="evidence" value="ECO:0007669"/>
    <property type="project" value="UniProtKB-UniRule"/>
</dbReference>
<dbReference type="GO" id="GO:0019064">
    <property type="term" value="P:fusion of virus membrane with host plasma membrane"/>
    <property type="evidence" value="ECO:0007669"/>
    <property type="project" value="UniProtKB-UniRule"/>
</dbReference>
<dbReference type="GO" id="GO:0046813">
    <property type="term" value="P:receptor-mediated virion attachment to host cell"/>
    <property type="evidence" value="ECO:0007669"/>
    <property type="project" value="UniProtKB-UniRule"/>
</dbReference>
<dbReference type="CDD" id="cd22377">
    <property type="entry name" value="TGEV-like_Spike_SD1-2_S1-S2_S2"/>
    <property type="match status" value="1"/>
</dbReference>
<dbReference type="Gene3D" id="1.20.5.300">
    <property type="match status" value="2"/>
</dbReference>
<dbReference type="Gene3D" id="2.60.40.3130">
    <property type="match status" value="1"/>
</dbReference>
<dbReference type="HAMAP" id="MF_04200">
    <property type="entry name" value="ALPHA_CORONA_SPIKE"/>
    <property type="match status" value="1"/>
</dbReference>
<dbReference type="InterPro" id="IPR042552">
    <property type="entry name" value="ALPHA_CORONA_SPIKE"/>
</dbReference>
<dbReference type="InterPro" id="IPR043607">
    <property type="entry name" value="CoV_S1_C"/>
</dbReference>
<dbReference type="InterPro" id="IPR043473">
    <property type="entry name" value="S2_sf_CoV"/>
</dbReference>
<dbReference type="InterPro" id="IPR002551">
    <property type="entry name" value="Spike_S1_CoV"/>
</dbReference>
<dbReference type="InterPro" id="IPR002552">
    <property type="entry name" value="Spike_S2_CoV"/>
</dbReference>
<dbReference type="InterPro" id="IPR043614">
    <property type="entry name" value="Spike_S2_CoV_C"/>
</dbReference>
<dbReference type="InterPro" id="IPR044873">
    <property type="entry name" value="Spike_S2_CoV_HR1"/>
</dbReference>
<dbReference type="InterPro" id="IPR044874">
    <property type="entry name" value="Spike_S2_CoV_HR2"/>
</dbReference>
<dbReference type="Pfam" id="PF01600">
    <property type="entry name" value="CoV_S1"/>
    <property type="match status" value="1"/>
</dbReference>
<dbReference type="Pfam" id="PF19209">
    <property type="entry name" value="CoV_S1_C"/>
    <property type="match status" value="1"/>
</dbReference>
<dbReference type="Pfam" id="PF01601">
    <property type="entry name" value="CoV_S2"/>
    <property type="match status" value="1"/>
</dbReference>
<dbReference type="Pfam" id="PF19214">
    <property type="entry name" value="CoV_S2_C"/>
    <property type="match status" value="1"/>
</dbReference>
<dbReference type="SUPFAM" id="SSF111474">
    <property type="entry name" value="Coronavirus S2 glycoprotein"/>
    <property type="match status" value="2"/>
</dbReference>
<dbReference type="PROSITE" id="PS51923">
    <property type="entry name" value="COV_S2_HR1"/>
    <property type="match status" value="1"/>
</dbReference>
<dbReference type="PROSITE" id="PS51924">
    <property type="entry name" value="COV_S2_HR2"/>
    <property type="match status" value="1"/>
</dbReference>
<evidence type="ECO:0000255" key="1">
    <source>
        <dbReference type="HAMAP-Rule" id="MF_04200"/>
    </source>
</evidence>
<evidence type="ECO:0000255" key="2">
    <source>
        <dbReference type="PROSITE-ProRule" id="PRU01271"/>
    </source>
</evidence>
<evidence type="ECO:0000255" key="3">
    <source>
        <dbReference type="PROSITE-ProRule" id="PRU01272"/>
    </source>
</evidence>
<comment type="function">
    <text evidence="1">S1 region attaches the virion to the cell membrane by interacting with host ANPEP/aminopeptidase N, initiating the infection. Binding to the receptor probably induces conformational changes in the S glycoprotein unmasking the fusion peptide of S2 region and activating membranes fusion. S2 region belongs to the class I viral fusion protein. Under the current model, the protein has at least 3 conformational states: pre-fusion native state, pre-hairpin intermediate state, and post-fusion hairpin state. During viral and target cell membrane fusion, the coiled coil regions (heptad repeats) regions assume a trimer-of-hairpins structure, positioning the fusion peptide in close proximity to the C-terminal region of the ectodomain. The formation of this structure appears to drive apposition and subsequent fusion of viral and target cell membranes.</text>
</comment>
<comment type="subunit">
    <text evidence="1">Homotrimer. During virus morphogenesis, found in a complex with M and HE proteins. Interacts with host ANPEP.</text>
</comment>
<comment type="subcellular location">
    <subcellularLocation>
        <location evidence="1">Virion membrane</location>
        <topology evidence="1">Single-pass type I membrane protein</topology>
    </subcellularLocation>
    <subcellularLocation>
        <location evidence="1">Host endoplasmic reticulum-Golgi intermediate compartment membrane</location>
        <topology evidence="1">Single-pass type I membrane protein</topology>
    </subcellularLocation>
    <text evidence="1">Accumulates in the endoplasmic reticulum-Golgi intermediate compartment, where it participates in virus particle assembly.</text>
</comment>
<comment type="domain">
    <text evidence="1">The KxHxx motif seems to function as an ER retrieval signal.</text>
</comment>
<comment type="similarity">
    <text evidence="1">Belongs to the alphacoronaviruses spike protein family.</text>
</comment>
<comment type="caution">
    <text evidence="1">In contrast to beta- and gammacoronaviruses, S glycoprotein is not cleaved into S1 and S2.</text>
</comment>
<reference key="1">
    <citation type="journal article" date="2004" name="Virus Res.">
        <title>Molecular characterization of a virulent canine coronavirus BGF strain.</title>
        <authorList>
            <person name="Sanchez-Morgado J.M."/>
            <person name="Poynter S."/>
            <person name="Morris T.H."/>
        </authorList>
    </citation>
    <scope>NUCLEOTIDE SEQUENCE [GENOMIC RNA]</scope>
</reference>
<accession>Q7T6T3</accession>
<keyword id="KW-0175">Coiled coil</keyword>
<keyword id="KW-0325">Glycoprotein</keyword>
<keyword id="KW-1043">Host membrane</keyword>
<keyword id="KW-0945">Host-virus interaction</keyword>
<keyword id="KW-0472">Membrane</keyword>
<keyword id="KW-0732">Signal</keyword>
<keyword id="KW-0812">Transmembrane</keyword>
<keyword id="KW-1133">Transmembrane helix</keyword>
<keyword id="KW-1161">Viral attachment to host cell</keyword>
<keyword id="KW-0261">Viral envelope protein</keyword>
<keyword id="KW-0946">Virion</keyword>
<keyword id="KW-0843">Virulence</keyword>
<keyword id="KW-1160">Virus entry into host cell</keyword>
<proteinExistence type="inferred from homology"/>
<gene>
    <name evidence="1" type="primary">S</name>
</gene>
<feature type="signal peptide" evidence="1">
    <location>
        <begin position="1"/>
        <end position="31"/>
    </location>
</feature>
<feature type="chain" id="PRO_0000289930" description="Spike glycoprotein" evidence="1">
    <location>
        <begin position="32"/>
        <end position="1453"/>
    </location>
</feature>
<feature type="topological domain" description="Virion surface" evidence="1">
    <location>
        <begin position="32"/>
        <end position="1394"/>
    </location>
</feature>
<feature type="transmembrane region" description="Helical" evidence="1">
    <location>
        <begin position="1395"/>
        <end position="1414"/>
    </location>
</feature>
<feature type="topological domain" description="Intravirion" evidence="1">
    <location>
        <begin position="1415"/>
        <end position="1453"/>
    </location>
</feature>
<feature type="region of interest" description="S1" evidence="1">
    <location>
        <begin position="32"/>
        <end position="780"/>
    </location>
</feature>
<feature type="region of interest" description="Interaction with host ANPEP" evidence="1">
    <location>
        <begin position="661"/>
        <end position="805"/>
    </location>
</feature>
<feature type="region of interest" description="S2" evidence="1">
    <location>
        <begin position="781"/>
        <end position="1453"/>
    </location>
</feature>
<feature type="region of interest" description="Fusion peptide" evidence="1">
    <location>
        <begin position="1026"/>
        <end position="1047"/>
    </location>
</feature>
<feature type="region of interest" description="Heptad repeat 1 (HR1)" evidence="2">
    <location>
        <begin position="1041"/>
        <end position="1160"/>
    </location>
</feature>
<feature type="region of interest" description="Heptad repeat 2 (HR2)" evidence="3">
    <location>
        <begin position="1309"/>
        <end position="1406"/>
    </location>
</feature>
<feature type="coiled-coil region" evidence="1">
    <location>
        <begin position="1108"/>
        <end position="1152"/>
    </location>
</feature>
<feature type="coiled-coil region" evidence="1">
    <location>
        <begin position="1342"/>
        <end position="1384"/>
    </location>
</feature>
<feature type="short sequence motif" description="KxHxx" evidence="1">
    <location>
        <begin position="1449"/>
        <end position="1453"/>
    </location>
</feature>
<sequence>MIVLTLCLFLVLYNSVICTSNNECVQVNVTQLPGNENIIRDFLFQNFKEEGTVVVGGYYPTEVWYNCSRTARTQAFKTFSNIHAFYFDMEAMENSTGDARGKPLLVHVHGNPVSIIVYISAYRHDVQGRPKLKHGLLCITKNSTTDYDRFTANQWRDICLGEDRKIPFSVVPTDNGTKLFGLEWNDDYVTAYISDDSHYLNINNNWFNNVTLLYSRSSTATWQHSAAYVYQGVSNFTYYKLNNTNGLKSYELCEDYEYCTGYATNVFAPTPGGYIPEGFSFNNWFMLTNSSTFVSGRFVTNQPLLVNCLWPVPSFGVAAQEFCFEGAQFSQCNGVSLNNTVDVIRFNLNFTTDVQSGMGATVFSLNTTGGVILDISCYNDTVSESSFYSYGEIPFGVIDGPRYCYVLYNGTALKYLGTLPPSVKEIAISKWGHFYINGYNFFSTFPIDCISFNLTTGASGAFWTIAYTSYTEALVQVENTAIKKVTYCNSHVNSIKCSQLTANLQNGFYPVASSEVGLVNKSVVLLPSFYSHTSVNITIDLGMRRSGYGQPVASSLSNISLPMQDNNTDVYCIRSNQFSFYVHSNCKSASWDNIFNSACTDVLEATAVIKTGTCPFSFDKLNNYLTFNKFCLSLNPTGANCKFDVVARTRTNEQGVGSLYVIYEEGDNIVGVPSDNSGLHDLSVLHLDSCTDYNIYGRNGVGIIRKTNSTLLSGLYYTSLSGDLLGFKNVSDGVVYSVTPCEVSAQAAVIDGAIVGAMTSINSELLGLTHWTTTPNFYYYSIYNYTNERVRGTVTDSNDVDCEPIITYSNIGVCKNGALVFINVTHSDGDVQPISTGNVTIPTNFTISVQVEYIQVYTTPVSIDCSRYVCNGNSRCNKLLTQYVSACHTIEQALAMGARLENMEIDSMLFVSENALKLASVEAFNSTDNLDPIYREWPNIGGSWLGGLKDILPSHNSKRKYRSAIEDLLFDKVVTSGLGTVDEDYKRCTGGYDIADLVCAQYYNGIMVLPGVANDDKMAMYTASLAGGITLGALGGGAVSIPFAVAVQARLNYVALQTDVLNKNQQILANAFNQAIGNITQAFGNVNDAIHQTSKGLATVAKALAKVQDVVNTQGQALSHLTVQLQNNFQAISSSISDIYNRLDELSADAQVDRLITGRLTALNAFVSQTLTRQAEVRASRQLAKDKVNECVRSQSQRFGFCGNGTHLFSLANAAPNGMIFFHTVLLPTAYETVTAWSGICASDGNRTFGLVVKDVQLTLFRNLDYKFYLTPRTMYQPRVATSSDFVQIEGCDVLFVNATVIELPSIIPDYIDINQTVQDILENFRPNWTVPELPLDIFNATYLNLTGEINDLEFRSEKLHNTTLELATLIDNINNTLVNLEWLNRIETYVKWPWYVWLLIGLVVIFCIPLLLFCCCSTGCCGCFGCIGSCCHSMCSRRQFESYEPIEKVHVH</sequence>
<name>SPIKE_CVCBG</name>